<dbReference type="EC" id="7.1.1.-" evidence="1"/>
<dbReference type="EMBL" id="DQ354691">
    <property type="protein sequence ID" value="ABC60503.1"/>
    <property type="molecule type" value="Genomic_DNA"/>
</dbReference>
<dbReference type="SMR" id="P0CD02"/>
<dbReference type="GO" id="GO:0009535">
    <property type="term" value="C:chloroplast thylakoid membrane"/>
    <property type="evidence" value="ECO:0007669"/>
    <property type="project" value="UniProtKB-SubCell"/>
</dbReference>
<dbReference type="GO" id="GO:0008137">
    <property type="term" value="F:NADH dehydrogenase (ubiquinone) activity"/>
    <property type="evidence" value="ECO:0007669"/>
    <property type="project" value="InterPro"/>
</dbReference>
<dbReference type="GO" id="GO:0048038">
    <property type="term" value="F:quinone binding"/>
    <property type="evidence" value="ECO:0007669"/>
    <property type="project" value="UniProtKB-KW"/>
</dbReference>
<dbReference type="GO" id="GO:0042773">
    <property type="term" value="P:ATP synthesis coupled electron transport"/>
    <property type="evidence" value="ECO:0007669"/>
    <property type="project" value="InterPro"/>
</dbReference>
<dbReference type="GO" id="GO:0019684">
    <property type="term" value="P:photosynthesis, light reaction"/>
    <property type="evidence" value="ECO:0007669"/>
    <property type="project" value="UniProtKB-UniRule"/>
</dbReference>
<dbReference type="HAMAP" id="MF_00445">
    <property type="entry name" value="NDH1_NuoN_1"/>
    <property type="match status" value="1"/>
</dbReference>
<dbReference type="InterPro" id="IPR010096">
    <property type="entry name" value="NADH-Q_OxRdtase_suN/2"/>
</dbReference>
<dbReference type="InterPro" id="IPR001750">
    <property type="entry name" value="ND/Mrp_TM"/>
</dbReference>
<dbReference type="InterPro" id="IPR045693">
    <property type="entry name" value="Ndh2_N"/>
</dbReference>
<dbReference type="NCBIfam" id="TIGR01770">
    <property type="entry name" value="NDH_I_N"/>
    <property type="match status" value="1"/>
</dbReference>
<dbReference type="NCBIfam" id="NF002701">
    <property type="entry name" value="PRK02504.1"/>
    <property type="match status" value="1"/>
</dbReference>
<dbReference type="PANTHER" id="PTHR22773">
    <property type="entry name" value="NADH DEHYDROGENASE"/>
    <property type="match status" value="1"/>
</dbReference>
<dbReference type="Pfam" id="PF19530">
    <property type="entry name" value="Ndh2_N"/>
    <property type="match status" value="1"/>
</dbReference>
<dbReference type="Pfam" id="PF00361">
    <property type="entry name" value="Proton_antipo_M"/>
    <property type="match status" value="1"/>
</dbReference>
<dbReference type="PRINTS" id="PR01434">
    <property type="entry name" value="NADHDHGNASE5"/>
</dbReference>
<accession>P0CD02</accession>
<accession>A1XG00</accession>
<keyword id="KW-0150">Chloroplast</keyword>
<keyword id="KW-0472">Membrane</keyword>
<keyword id="KW-0520">NAD</keyword>
<keyword id="KW-0521">NADP</keyword>
<keyword id="KW-0934">Plastid</keyword>
<keyword id="KW-0618">Plastoquinone</keyword>
<keyword id="KW-0874">Quinone</keyword>
<keyword id="KW-0793">Thylakoid</keyword>
<keyword id="KW-1278">Translocase</keyword>
<keyword id="KW-0812">Transmembrane</keyword>
<keyword id="KW-1133">Transmembrane helix</keyword>
<keyword id="KW-0813">Transport</keyword>
<gene>
    <name evidence="1" type="primary">ndhB1</name>
</gene>
<reference key="1">
    <citation type="journal article" date="2007" name="BMC Genomics">
        <title>Comparative chloroplast genomics: analyses including new sequences from the angiosperms Nuphar advena and Ranunculus macranthus.</title>
        <authorList>
            <person name="Raubeson L.A."/>
            <person name="Peery R."/>
            <person name="Chumley T.W."/>
            <person name="Dziubek C."/>
            <person name="Fourcade H.M."/>
            <person name="Boore J.L."/>
            <person name="Jansen R.K."/>
        </authorList>
    </citation>
    <scope>NUCLEOTIDE SEQUENCE [LARGE SCALE GENOMIC DNA]</scope>
</reference>
<evidence type="ECO:0000255" key="1">
    <source>
        <dbReference type="HAMAP-Rule" id="MF_00445"/>
    </source>
</evidence>
<geneLocation type="chloroplast"/>
<protein>
    <recommendedName>
        <fullName evidence="1">NAD(P)H-quinone oxidoreductase subunit 2 A, chloroplastic</fullName>
        <ecNumber evidence="1">7.1.1.-</ecNumber>
    </recommendedName>
    <alternativeName>
        <fullName evidence="1">NAD(P)H dehydrogenase, subunit 2 A</fullName>
    </alternativeName>
    <alternativeName>
        <fullName evidence="1">NADH-plastoquinone oxidoreductase subunit 2 A</fullName>
    </alternativeName>
</protein>
<name>NU2C1_NUPAD</name>
<proteinExistence type="inferred from homology"/>
<sequence>MIWHVQNENFILDSTRIFMKAFHLLLFNGSFIFPECILIFGLILLLMIDSTSDQKDTPWLYFISSTSLVMSITALLFRWREEPMISFSGNFQTNNFNEIFQFLILLCSTLCIPLSVEYIECTEMAITEFLLFVLTATLGGMFLCGANDLITIFVAPECFSLCSYLLSGYTKRDVRSNEATTKYLLMGGASSSILVYGFSWLYGSSGGEIELQEIVNGLINTQMYNSPGISIALISITVGIGFKLSPAPFHQWTPDVYEGSPTPVVAFLSVTSKVAASASATRIFDIPFYFSSNEWHLLLEILAILSMILGNLIAITQTSMKRMLAYSSIGQIGYVIIGIIVGDSNDGYASMITYMLFYISMNLGTFACIVLFGLRTGTDNIRDYAGLYTKDPFSALSSALCLLSLGGIPPLAGFFGKLYLFWCGWQAGLYFLVSIGLLTSVVSIYYYLKIIKLLMTGRNKEITPHVRNYRRSPLRSNNSIELSMIVCVIASTIPGISMNPIIAIAQDTLF</sequence>
<comment type="function">
    <text evidence="1">NDH shuttles electrons from NAD(P)H:plastoquinone, via FMN and iron-sulfur (Fe-S) centers, to quinones in the photosynthetic chain and possibly in a chloroplast respiratory chain. The immediate electron acceptor for the enzyme in this species is believed to be plastoquinone. Couples the redox reaction to proton translocation, and thus conserves the redox energy in a proton gradient.</text>
</comment>
<comment type="catalytic activity">
    <reaction evidence="1">
        <text>a plastoquinone + NADH + (n+1) H(+)(in) = a plastoquinol + NAD(+) + n H(+)(out)</text>
        <dbReference type="Rhea" id="RHEA:42608"/>
        <dbReference type="Rhea" id="RHEA-COMP:9561"/>
        <dbReference type="Rhea" id="RHEA-COMP:9562"/>
        <dbReference type="ChEBI" id="CHEBI:15378"/>
        <dbReference type="ChEBI" id="CHEBI:17757"/>
        <dbReference type="ChEBI" id="CHEBI:57540"/>
        <dbReference type="ChEBI" id="CHEBI:57945"/>
        <dbReference type="ChEBI" id="CHEBI:62192"/>
    </reaction>
</comment>
<comment type="catalytic activity">
    <reaction evidence="1">
        <text>a plastoquinone + NADPH + (n+1) H(+)(in) = a plastoquinol + NADP(+) + n H(+)(out)</text>
        <dbReference type="Rhea" id="RHEA:42612"/>
        <dbReference type="Rhea" id="RHEA-COMP:9561"/>
        <dbReference type="Rhea" id="RHEA-COMP:9562"/>
        <dbReference type="ChEBI" id="CHEBI:15378"/>
        <dbReference type="ChEBI" id="CHEBI:17757"/>
        <dbReference type="ChEBI" id="CHEBI:57783"/>
        <dbReference type="ChEBI" id="CHEBI:58349"/>
        <dbReference type="ChEBI" id="CHEBI:62192"/>
    </reaction>
</comment>
<comment type="subunit">
    <text evidence="1">NDH is composed of at least 16 different subunits, 5 of which are encoded in the nucleus.</text>
</comment>
<comment type="subcellular location">
    <subcellularLocation>
        <location evidence="1">Plastid</location>
        <location evidence="1">Chloroplast thylakoid membrane</location>
        <topology evidence="1">Multi-pass membrane protein</topology>
    </subcellularLocation>
</comment>
<comment type="similarity">
    <text evidence="1">Belongs to the complex I subunit 2 family.</text>
</comment>
<feature type="chain" id="PRO_0000344274" description="NAD(P)H-quinone oxidoreductase subunit 2 A, chloroplastic">
    <location>
        <begin position="1"/>
        <end position="510"/>
    </location>
</feature>
<feature type="transmembrane region" description="Helical" evidence="1">
    <location>
        <begin position="24"/>
        <end position="44"/>
    </location>
</feature>
<feature type="transmembrane region" description="Helical" evidence="1">
    <location>
        <begin position="57"/>
        <end position="77"/>
    </location>
</feature>
<feature type="transmembrane region" description="Helical" evidence="1">
    <location>
        <begin position="99"/>
        <end position="119"/>
    </location>
</feature>
<feature type="transmembrane region" description="Helical" evidence="1">
    <location>
        <begin position="124"/>
        <end position="144"/>
    </location>
</feature>
<feature type="transmembrane region" description="Helical" evidence="1">
    <location>
        <begin position="149"/>
        <end position="169"/>
    </location>
</feature>
<feature type="transmembrane region" description="Helical" evidence="1">
    <location>
        <begin position="183"/>
        <end position="203"/>
    </location>
</feature>
<feature type="transmembrane region" description="Helical" evidence="1">
    <location>
        <begin position="229"/>
        <end position="249"/>
    </location>
</feature>
<feature type="transmembrane region" description="Helical" evidence="1">
    <location>
        <begin position="295"/>
        <end position="315"/>
    </location>
</feature>
<feature type="transmembrane region" description="Helical" evidence="1">
    <location>
        <begin position="323"/>
        <end position="343"/>
    </location>
</feature>
<feature type="transmembrane region" description="Helical" evidence="1">
    <location>
        <begin position="354"/>
        <end position="374"/>
    </location>
</feature>
<feature type="transmembrane region" description="Helical" evidence="1">
    <location>
        <begin position="395"/>
        <end position="415"/>
    </location>
</feature>
<feature type="transmembrane region" description="Helical" evidence="1">
    <location>
        <begin position="418"/>
        <end position="438"/>
    </location>
</feature>
<feature type="transmembrane region" description="Helical" evidence="1">
    <location>
        <begin position="484"/>
        <end position="504"/>
    </location>
</feature>
<organism>
    <name type="scientific">Nuphar advena</name>
    <name type="common">Common spatterdock</name>
    <name type="synonym">Nuphar lutea subsp. advena</name>
    <dbReference type="NCBI Taxonomy" id="77108"/>
    <lineage>
        <taxon>Eukaryota</taxon>
        <taxon>Viridiplantae</taxon>
        <taxon>Streptophyta</taxon>
        <taxon>Embryophyta</taxon>
        <taxon>Tracheophyta</taxon>
        <taxon>Spermatophyta</taxon>
        <taxon>Magnoliopsida</taxon>
        <taxon>Nymphaeales</taxon>
        <taxon>Nymphaeaceae</taxon>
        <taxon>Nuphar</taxon>
    </lineage>
</organism>